<accession>Q1KVY3</accession>
<name>PSAA_TETOB</name>
<proteinExistence type="inferred from homology"/>
<reference key="1">
    <citation type="journal article" date="2006" name="BMC Evol. Biol.">
        <title>The complete chloroplast genome sequence of the chlorophycean green alga Scenedesmus obliquus reveals a compact gene organization and a biased distribution of genes on the two DNA strands.</title>
        <authorList>
            <person name="de Cambiaire J.-C."/>
            <person name="Otis C."/>
            <person name="Lemieux C."/>
            <person name="Turmel M."/>
        </authorList>
    </citation>
    <scope>NUCLEOTIDE SEQUENCE [LARGE SCALE GENOMIC DNA]</scope>
    <source>
        <strain>UTEX 393</strain>
    </source>
</reference>
<evidence type="ECO:0000255" key="1">
    <source>
        <dbReference type="HAMAP-Rule" id="MF_00458"/>
    </source>
</evidence>
<feature type="chain" id="PRO_0000275961" description="Photosystem I P700 chlorophyll a apoprotein A1">
    <location>
        <begin position="1"/>
        <end position="751"/>
    </location>
</feature>
<feature type="transmembrane region" description="Helical; Name=I" evidence="1">
    <location>
        <begin position="73"/>
        <end position="96"/>
    </location>
</feature>
<feature type="transmembrane region" description="Helical; Name=II" evidence="1">
    <location>
        <begin position="159"/>
        <end position="182"/>
    </location>
</feature>
<feature type="transmembrane region" description="Helical; Name=III" evidence="1">
    <location>
        <begin position="198"/>
        <end position="222"/>
    </location>
</feature>
<feature type="transmembrane region" description="Helical; Name=IV" evidence="1">
    <location>
        <begin position="294"/>
        <end position="312"/>
    </location>
</feature>
<feature type="transmembrane region" description="Helical; Name=V" evidence="1">
    <location>
        <begin position="349"/>
        <end position="372"/>
    </location>
</feature>
<feature type="transmembrane region" description="Helical; Name=VI" evidence="1">
    <location>
        <begin position="388"/>
        <end position="414"/>
    </location>
</feature>
<feature type="transmembrane region" description="Helical; Name=VII" evidence="1">
    <location>
        <begin position="436"/>
        <end position="458"/>
    </location>
</feature>
<feature type="transmembrane region" description="Helical; Name=VIII" evidence="1">
    <location>
        <begin position="533"/>
        <end position="551"/>
    </location>
</feature>
<feature type="transmembrane region" description="Helical; Name=IX" evidence="1">
    <location>
        <begin position="591"/>
        <end position="612"/>
    </location>
</feature>
<feature type="transmembrane region" description="Helical; Name=X" evidence="1">
    <location>
        <begin position="665"/>
        <end position="687"/>
    </location>
</feature>
<feature type="transmembrane region" description="Helical; Name=XI" evidence="1">
    <location>
        <begin position="725"/>
        <end position="745"/>
    </location>
</feature>
<feature type="binding site" evidence="1">
    <location>
        <position position="575"/>
    </location>
    <ligand>
        <name>[4Fe-4S] cluster</name>
        <dbReference type="ChEBI" id="CHEBI:49883"/>
        <note>ligand shared between dimeric partners</note>
    </ligand>
</feature>
<feature type="binding site" evidence="1">
    <location>
        <position position="584"/>
    </location>
    <ligand>
        <name>[4Fe-4S] cluster</name>
        <dbReference type="ChEBI" id="CHEBI:49883"/>
        <note>ligand shared between dimeric partners</note>
    </ligand>
</feature>
<feature type="binding site" description="axial binding residue" evidence="1">
    <location>
        <position position="676"/>
    </location>
    <ligand>
        <name>chlorophyll a'</name>
        <dbReference type="ChEBI" id="CHEBI:189419"/>
        <label>A1</label>
    </ligand>
    <ligandPart>
        <name>Mg</name>
        <dbReference type="ChEBI" id="CHEBI:25107"/>
    </ligandPart>
</feature>
<feature type="binding site" description="axial binding residue" evidence="1">
    <location>
        <position position="684"/>
    </location>
    <ligand>
        <name>chlorophyll a</name>
        <dbReference type="ChEBI" id="CHEBI:58416"/>
        <label>A3</label>
    </ligand>
    <ligandPart>
        <name>Mg</name>
        <dbReference type="ChEBI" id="CHEBI:25107"/>
    </ligandPart>
</feature>
<feature type="binding site" evidence="1">
    <location>
        <position position="692"/>
    </location>
    <ligand>
        <name>chlorophyll a</name>
        <dbReference type="ChEBI" id="CHEBI:58416"/>
        <label>A3</label>
    </ligand>
</feature>
<feature type="binding site" evidence="1">
    <location>
        <position position="693"/>
    </location>
    <ligand>
        <name>phylloquinone</name>
        <dbReference type="ChEBI" id="CHEBI:18067"/>
        <label>A</label>
    </ligand>
</feature>
<gene>
    <name evidence="1" type="primary">psaA</name>
</gene>
<geneLocation type="chloroplast"/>
<organism>
    <name type="scientific">Tetradesmus obliquus</name>
    <name type="common">Green alga</name>
    <name type="synonym">Acutodesmus obliquus</name>
    <dbReference type="NCBI Taxonomy" id="3088"/>
    <lineage>
        <taxon>Eukaryota</taxon>
        <taxon>Viridiplantae</taxon>
        <taxon>Chlorophyta</taxon>
        <taxon>core chlorophytes</taxon>
        <taxon>Chlorophyceae</taxon>
        <taxon>CS clade</taxon>
        <taxon>Sphaeropleales</taxon>
        <taxon>Scenedesmaceae</taxon>
        <taxon>Tetradesmus</taxon>
    </lineage>
</organism>
<comment type="function">
    <text>PsaA and PsaB bind P700, the primary electron donor of photosystem I (PSI), as well as the electron acceptors A0, A1 and FX. PSI is a plastocyanin/cytochrome c6-ferredoxin oxidoreductase, converting photonic excitation into a charge separation, which transfers an electron from the donor P700 chlorophyll pair to the spectroscopically characterized acceptors A0, A1, FX, FA and FB in turn. Oxidized P700 is reduced on the lumenal side of the thylakoid membrane by plastocyanin or cytochrome c6.</text>
</comment>
<comment type="catalytic activity">
    <reaction evidence="1">
        <text>reduced [plastocyanin] + hnu + oxidized [2Fe-2S]-[ferredoxin] = oxidized [plastocyanin] + reduced [2Fe-2S]-[ferredoxin]</text>
        <dbReference type="Rhea" id="RHEA:30407"/>
        <dbReference type="Rhea" id="RHEA-COMP:10000"/>
        <dbReference type="Rhea" id="RHEA-COMP:10001"/>
        <dbReference type="Rhea" id="RHEA-COMP:10039"/>
        <dbReference type="Rhea" id="RHEA-COMP:10040"/>
        <dbReference type="ChEBI" id="CHEBI:29036"/>
        <dbReference type="ChEBI" id="CHEBI:30212"/>
        <dbReference type="ChEBI" id="CHEBI:33737"/>
        <dbReference type="ChEBI" id="CHEBI:33738"/>
        <dbReference type="ChEBI" id="CHEBI:49552"/>
        <dbReference type="EC" id="1.97.1.12"/>
    </reaction>
</comment>
<comment type="cofactor">
    <text evidence="1">P700 is a chlorophyll a/chlorophyll a' dimer, A0 is one or more chlorophyll a, A1 is one or both phylloquinones and FX is a shared 4Fe-4S iron-sulfur center.</text>
</comment>
<comment type="subunit">
    <text evidence="1">The PsaA/B heterodimer binds the P700 chlorophyll special pair and subsequent electron acceptors. PSI consists of a core antenna complex that captures photons, and an electron transfer chain that converts photonic excitation into a charge separation. The eukaryotic PSI reaction center is composed of at least 11 subunits.</text>
</comment>
<comment type="subcellular location">
    <subcellularLocation>
        <location evidence="1">Plastid</location>
        <location evidence="1">Chloroplast thylakoid membrane</location>
        <topology evidence="1">Multi-pass membrane protein</topology>
    </subcellularLocation>
</comment>
<comment type="similarity">
    <text evidence="1">Belongs to the PsaA/PsaB family.</text>
</comment>
<sequence length="751" mass="83248">MTISSPEREAKKVKIAVDRNPVETSFEKWAKPGHFSRTLSKGPNTTTWIWNLHADAHDFDSHTSDLEEISRKVFSAHFGQLGVIFIWLSGMYFHGARFSNYEAWLSDPVHIKPSAQVVWPVVGQEILNGDVGGGFQGIQITSGFFQLWRASGITSELQLYTTAIGGLVMAAAMFFAGWFHYHKAAPKLEWFQNVESMLNHHLAGLLGLGSLSWAGHQIHVSLPVNKLLDAGVDPKEIPLPHEFLLNRQIMQDLYPSFAKGLAPFFTLQWGEYSDFLTFNGGLNPVTGGLWLSDTAHHHLAIAVLFLVAGHMYRTNWGIGHSMREILDAHKGPFTGEGHVGLYEILTTSWHAQLAINLALFGSLSIIVAHHMYSMPPYPYLATDYGTQLSLFTHHNWIGGFCIVGAGAHAAIFMVRDYDPTNNYNNLLDRVIRHRDAIISHLNWVCIFLGFHSFGLYIHNDTMSALGRPQDMFSDTAIQLQPVFAQWIQKTHFLAPQLTAPTALSATSATWGGDVVAVGGKVAMMPISLGTSDFLVHHIHAFTIHVTVLILLKGVLFARSSRLIPDKANLGFRFPCDGPGRGGTCQVSAWDHVFLGLFWMYNSLSIAIFHFSWKMQSDVWGTVTANGVSHITGGNFAQSANTINGWLRDFLWAQSSQVIQSYGSALSAYGLMFLGAHFVWAFSLMFLFSGRGYWQELIESIIWAHSKLKVAPSIQPRALSITQGRAVGVAHYLLGGIATTWSFFLARIIAVG</sequence>
<keyword id="KW-0004">4Fe-4S</keyword>
<keyword id="KW-0148">Chlorophyll</keyword>
<keyword id="KW-0150">Chloroplast</keyword>
<keyword id="KW-0157">Chromophore</keyword>
<keyword id="KW-0249">Electron transport</keyword>
<keyword id="KW-0408">Iron</keyword>
<keyword id="KW-0411">Iron-sulfur</keyword>
<keyword id="KW-0460">Magnesium</keyword>
<keyword id="KW-0472">Membrane</keyword>
<keyword id="KW-0479">Metal-binding</keyword>
<keyword id="KW-0560">Oxidoreductase</keyword>
<keyword id="KW-0602">Photosynthesis</keyword>
<keyword id="KW-0603">Photosystem I</keyword>
<keyword id="KW-0934">Plastid</keyword>
<keyword id="KW-0793">Thylakoid</keyword>
<keyword id="KW-0812">Transmembrane</keyword>
<keyword id="KW-1133">Transmembrane helix</keyword>
<keyword id="KW-0813">Transport</keyword>
<protein>
    <recommendedName>
        <fullName evidence="1">Photosystem I P700 chlorophyll a apoprotein A1</fullName>
        <ecNumber evidence="1">1.97.1.12</ecNumber>
    </recommendedName>
    <alternativeName>
        <fullName evidence="1">PSI-A</fullName>
    </alternativeName>
    <alternativeName>
        <fullName evidence="1">PsaA</fullName>
    </alternativeName>
</protein>
<dbReference type="EC" id="1.97.1.12" evidence="1"/>
<dbReference type="EMBL" id="DQ396875">
    <property type="protein sequence ID" value="ABD48243.1"/>
    <property type="molecule type" value="Genomic_DNA"/>
</dbReference>
<dbReference type="RefSeq" id="YP_635941.1">
    <property type="nucleotide sequence ID" value="NC_008101.1"/>
</dbReference>
<dbReference type="SMR" id="Q1KVY3"/>
<dbReference type="GeneID" id="4099780"/>
<dbReference type="GO" id="GO:0009535">
    <property type="term" value="C:chloroplast thylakoid membrane"/>
    <property type="evidence" value="ECO:0007669"/>
    <property type="project" value="UniProtKB-SubCell"/>
</dbReference>
<dbReference type="GO" id="GO:0009522">
    <property type="term" value="C:photosystem I"/>
    <property type="evidence" value="ECO:0007669"/>
    <property type="project" value="UniProtKB-KW"/>
</dbReference>
<dbReference type="GO" id="GO:0051539">
    <property type="term" value="F:4 iron, 4 sulfur cluster binding"/>
    <property type="evidence" value="ECO:0007669"/>
    <property type="project" value="UniProtKB-KW"/>
</dbReference>
<dbReference type="GO" id="GO:0016168">
    <property type="term" value="F:chlorophyll binding"/>
    <property type="evidence" value="ECO:0007669"/>
    <property type="project" value="UniProtKB-KW"/>
</dbReference>
<dbReference type="GO" id="GO:0009055">
    <property type="term" value="F:electron transfer activity"/>
    <property type="evidence" value="ECO:0007669"/>
    <property type="project" value="UniProtKB-UniRule"/>
</dbReference>
<dbReference type="GO" id="GO:0000287">
    <property type="term" value="F:magnesium ion binding"/>
    <property type="evidence" value="ECO:0007669"/>
    <property type="project" value="UniProtKB-UniRule"/>
</dbReference>
<dbReference type="GO" id="GO:0016491">
    <property type="term" value="F:oxidoreductase activity"/>
    <property type="evidence" value="ECO:0007669"/>
    <property type="project" value="UniProtKB-KW"/>
</dbReference>
<dbReference type="GO" id="GO:0015979">
    <property type="term" value="P:photosynthesis"/>
    <property type="evidence" value="ECO:0007669"/>
    <property type="project" value="UniProtKB-UniRule"/>
</dbReference>
<dbReference type="FunFam" id="1.20.1130.10:FF:000001">
    <property type="entry name" value="Photosystem I P700 chlorophyll a apoprotein A2"/>
    <property type="match status" value="1"/>
</dbReference>
<dbReference type="Gene3D" id="1.20.1130.10">
    <property type="entry name" value="Photosystem I PsaA/PsaB"/>
    <property type="match status" value="1"/>
</dbReference>
<dbReference type="HAMAP" id="MF_00458">
    <property type="entry name" value="PSI_PsaA"/>
    <property type="match status" value="1"/>
</dbReference>
<dbReference type="InterPro" id="IPR006243">
    <property type="entry name" value="PSI_PsaA"/>
</dbReference>
<dbReference type="InterPro" id="IPR001280">
    <property type="entry name" value="PSI_PsaA/B"/>
</dbReference>
<dbReference type="InterPro" id="IPR020586">
    <property type="entry name" value="PSI_PsaA/B_CS"/>
</dbReference>
<dbReference type="InterPro" id="IPR036408">
    <property type="entry name" value="PSI_PsaA/B_sf"/>
</dbReference>
<dbReference type="NCBIfam" id="TIGR01335">
    <property type="entry name" value="psaA"/>
    <property type="match status" value="1"/>
</dbReference>
<dbReference type="PANTHER" id="PTHR30128">
    <property type="entry name" value="OUTER MEMBRANE PROTEIN, OMPA-RELATED"/>
    <property type="match status" value="1"/>
</dbReference>
<dbReference type="PANTHER" id="PTHR30128:SF19">
    <property type="entry name" value="PHOTOSYSTEM I P700 CHLOROPHYLL A APOPROTEIN A1-RELATED"/>
    <property type="match status" value="1"/>
</dbReference>
<dbReference type="Pfam" id="PF00223">
    <property type="entry name" value="PsaA_PsaB"/>
    <property type="match status" value="1"/>
</dbReference>
<dbReference type="PIRSF" id="PIRSF002905">
    <property type="entry name" value="PSI_A"/>
    <property type="match status" value="1"/>
</dbReference>
<dbReference type="PRINTS" id="PR00257">
    <property type="entry name" value="PHOTSYSPSAAB"/>
</dbReference>
<dbReference type="SUPFAM" id="SSF81558">
    <property type="entry name" value="Photosystem I subunits PsaA/PsaB"/>
    <property type="match status" value="1"/>
</dbReference>
<dbReference type="PROSITE" id="PS00419">
    <property type="entry name" value="PHOTOSYSTEM_I_PSAAB"/>
    <property type="match status" value="1"/>
</dbReference>